<sequence>MTELSPKYNPAEVEAGRYQKWLDADVFKPSGDQKAKPYSIVIPPPNVTGKLHLGHAWDTTLQDIIIRQKRMQGFDTLWLPGMDHAGIATQAKVEERLREQGISRYDLGRDKFLDKVWEWKDEYATTIKEQWGKMGLSVDYSRERFTLDEGLSKAVRKVFVDLYKKGWIYRGEFIINWDPAARTALSDIEVIHKDVEGAFYHMNYMLEDGSRALQVATTRPETMFGDVAVAVNPEDPRYKDLIGKNVILPIVNKLIPIVGDEHADPEFGTGVVKITPAHDPNDFEVGQRHNLPQVNVMNDDGTMNELAGDFAGMDRFEARQATVAKLEELGALVNIEKRVHSVGHSERSGAVVEPRLSTQWFVKMDELAKQAMDNQETDDRVDFYPPRFNDTFLQWMENVHDWVISRQLWWGHQIPAWYNAEGEIYVGEEAPEGDDWTQDEDVLDTWFSSALWPFSTMGWPDTDVEDFKRYFPTSTLVTGYDIIFFWVSRMIFQSLEFTGRQPFQNVLIHGLIRDEEGRKMSKSLGNGIDPMDVIEKYGADSLRWFLSNGSAPGQDVRFSYEKMDASWNFINKIWNISRYILMNNEGLTLEDAESNVAKVAASEAGNVTDQWILHNLNETIAKVTENFDKFEFGVAGHILYNFIWEEFANWYVELTKEVLYSDNEAEKVITRSVLLYTLDKILRLLHPIMPFVTEEIYAQYAQGSIVTVDYPVVRPAFENEAAHKGVESLKDLIRAVRNARAEVNVAPSKPITILVKTADSELEDFFNSNINYIKCFTNPEKLEISSAIAAPELAMTSIITGAEIYLPLADLLNVEEELARLDKELAKWQKELDMVGKKLGNERFVANAKPEVVQKEKDKQADYQAKYDATQERIAEMKKIKS</sequence>
<comment type="function">
    <text evidence="1">Catalyzes the attachment of valine to tRNA(Val). As ValRS can inadvertently accommodate and process structurally similar amino acids such as threonine, to avoid such errors, it has a 'posttransfer' editing activity that hydrolyzes mischarged Thr-tRNA(Val) in a tRNA-dependent manner.</text>
</comment>
<comment type="catalytic activity">
    <reaction evidence="1">
        <text>tRNA(Val) + L-valine + ATP = L-valyl-tRNA(Val) + AMP + diphosphate</text>
        <dbReference type="Rhea" id="RHEA:10704"/>
        <dbReference type="Rhea" id="RHEA-COMP:9672"/>
        <dbReference type="Rhea" id="RHEA-COMP:9708"/>
        <dbReference type="ChEBI" id="CHEBI:30616"/>
        <dbReference type="ChEBI" id="CHEBI:33019"/>
        <dbReference type="ChEBI" id="CHEBI:57762"/>
        <dbReference type="ChEBI" id="CHEBI:78442"/>
        <dbReference type="ChEBI" id="CHEBI:78537"/>
        <dbReference type="ChEBI" id="CHEBI:456215"/>
        <dbReference type="EC" id="6.1.1.9"/>
    </reaction>
</comment>
<comment type="subunit">
    <text evidence="1">Monomer.</text>
</comment>
<comment type="subcellular location">
    <subcellularLocation>
        <location evidence="1">Cytoplasm</location>
    </subcellularLocation>
</comment>
<comment type="domain">
    <text evidence="1">ValRS has two distinct active sites: one for aminoacylation and one for editing. The misactivated threonine is translocated from the active site to the editing site.</text>
</comment>
<comment type="domain">
    <text evidence="1">The C-terminal coiled-coil domain is crucial for aminoacylation activity.</text>
</comment>
<comment type="similarity">
    <text evidence="1">Belongs to the class-I aminoacyl-tRNA synthetase family. ValS type 1 subfamily.</text>
</comment>
<comment type="sequence caution" evidence="2">
    <conflict type="frameshift">
        <sequence resource="EMBL-CDS" id="AAZ51910"/>
    </conflict>
</comment>
<organism>
    <name type="scientific">Streptococcus pyogenes serotype M1</name>
    <dbReference type="NCBI Taxonomy" id="301447"/>
    <lineage>
        <taxon>Bacteria</taxon>
        <taxon>Bacillati</taxon>
        <taxon>Bacillota</taxon>
        <taxon>Bacilli</taxon>
        <taxon>Lactobacillales</taxon>
        <taxon>Streptococcaceae</taxon>
        <taxon>Streptococcus</taxon>
    </lineage>
</organism>
<reference key="1">
    <citation type="journal article" date="2001" name="Proc. Natl. Acad. Sci. U.S.A.">
        <title>Complete genome sequence of an M1 strain of Streptococcus pyogenes.</title>
        <authorList>
            <person name="Ferretti J.J."/>
            <person name="McShan W.M."/>
            <person name="Ajdic D.J."/>
            <person name="Savic D.J."/>
            <person name="Savic G."/>
            <person name="Lyon K."/>
            <person name="Primeaux C."/>
            <person name="Sezate S."/>
            <person name="Suvorov A.N."/>
            <person name="Kenton S."/>
            <person name="Lai H.S."/>
            <person name="Lin S.P."/>
            <person name="Qian Y."/>
            <person name="Jia H.G."/>
            <person name="Najar F.Z."/>
            <person name="Ren Q."/>
            <person name="Zhu H."/>
            <person name="Song L."/>
            <person name="White J."/>
            <person name="Yuan X."/>
            <person name="Clifton S.W."/>
            <person name="Roe B.A."/>
            <person name="McLaughlin R.E."/>
        </authorList>
    </citation>
    <scope>NUCLEOTIDE SEQUENCE [LARGE SCALE GENOMIC DNA]</scope>
    <source>
        <strain>ATCC 700294 / SF370 / Serotype M1</strain>
    </source>
</reference>
<reference key="2">
    <citation type="journal article" date="2005" name="J. Infect. Dis.">
        <title>Evolutionary origin and emergence of a highly successful clone of serotype M1 group A Streptococcus involved multiple horizontal gene transfer events.</title>
        <authorList>
            <person name="Sumby P."/>
            <person name="Porcella S.F."/>
            <person name="Madrigal A.G."/>
            <person name="Barbian K.D."/>
            <person name="Virtaneva K."/>
            <person name="Ricklefs S.M."/>
            <person name="Sturdevant D.E."/>
            <person name="Graham M.R."/>
            <person name="Vuopio-Varkila J."/>
            <person name="Hoe N.P."/>
            <person name="Musser J.M."/>
        </authorList>
    </citation>
    <scope>NUCLEOTIDE SEQUENCE [LARGE SCALE GENOMIC DNA]</scope>
    <source>
        <strain>ATCC BAA-947 / MGAS5005 / Serotype M1</strain>
    </source>
</reference>
<keyword id="KW-0030">Aminoacyl-tRNA synthetase</keyword>
<keyword id="KW-0067">ATP-binding</keyword>
<keyword id="KW-0175">Coiled coil</keyword>
<keyword id="KW-0963">Cytoplasm</keyword>
<keyword id="KW-0436">Ligase</keyword>
<keyword id="KW-0547">Nucleotide-binding</keyword>
<keyword id="KW-0648">Protein biosynthesis</keyword>
<keyword id="KW-1185">Reference proteome</keyword>
<protein>
    <recommendedName>
        <fullName evidence="1">Valine--tRNA ligase</fullName>
        <ecNumber evidence="1">6.1.1.9</ecNumber>
    </recommendedName>
    <alternativeName>
        <fullName evidence="1">Valyl-tRNA synthetase</fullName>
        <shortName evidence="1">ValRS</shortName>
    </alternativeName>
</protein>
<name>SYV_STRP1</name>
<feature type="chain" id="PRO_0000224576" description="Valine--tRNA ligase">
    <location>
        <begin position="1"/>
        <end position="882"/>
    </location>
</feature>
<feature type="coiled-coil region" evidence="1">
    <location>
        <begin position="808"/>
        <end position="882"/>
    </location>
</feature>
<feature type="short sequence motif" description="'HIGH' region">
    <location>
        <begin position="45"/>
        <end position="55"/>
    </location>
</feature>
<feature type="short sequence motif" description="'KMSKS' region">
    <location>
        <begin position="519"/>
        <end position="523"/>
    </location>
</feature>
<feature type="binding site" evidence="1">
    <location>
        <position position="522"/>
    </location>
    <ligand>
        <name>ATP</name>
        <dbReference type="ChEBI" id="CHEBI:30616"/>
    </ligand>
</feature>
<accession>Q99YS1</accession>
<accession>Q48XL5</accession>
<dbReference type="EC" id="6.1.1.9" evidence="1"/>
<dbReference type="EMBL" id="AE004092">
    <property type="protein sequence ID" value="AAK34355.1"/>
    <property type="molecule type" value="Genomic_DNA"/>
</dbReference>
<dbReference type="EMBL" id="CP000017">
    <property type="protein sequence ID" value="AAZ51910.1"/>
    <property type="status" value="ALT_FRAME"/>
    <property type="molecule type" value="Genomic_DNA"/>
</dbReference>
<dbReference type="RefSeq" id="NP_269634.1">
    <property type="nucleotide sequence ID" value="NC_002737.2"/>
</dbReference>
<dbReference type="SMR" id="Q99YS1"/>
<dbReference type="PaxDb" id="1314-HKU360_01333"/>
<dbReference type="KEGG" id="spy:SPy_1568"/>
<dbReference type="KEGG" id="spz:M5005_Spy1292"/>
<dbReference type="PATRIC" id="fig|160490.10.peg.1370"/>
<dbReference type="HOGENOM" id="CLU_001493_0_2_9"/>
<dbReference type="OMA" id="LDTWMDS"/>
<dbReference type="Proteomes" id="UP000000750">
    <property type="component" value="Chromosome"/>
</dbReference>
<dbReference type="GO" id="GO:0005829">
    <property type="term" value="C:cytosol"/>
    <property type="evidence" value="ECO:0007669"/>
    <property type="project" value="TreeGrafter"/>
</dbReference>
<dbReference type="GO" id="GO:0002161">
    <property type="term" value="F:aminoacyl-tRNA deacylase activity"/>
    <property type="evidence" value="ECO:0007669"/>
    <property type="project" value="InterPro"/>
</dbReference>
<dbReference type="GO" id="GO:0005524">
    <property type="term" value="F:ATP binding"/>
    <property type="evidence" value="ECO:0007669"/>
    <property type="project" value="UniProtKB-UniRule"/>
</dbReference>
<dbReference type="GO" id="GO:0004832">
    <property type="term" value="F:valine-tRNA ligase activity"/>
    <property type="evidence" value="ECO:0007669"/>
    <property type="project" value="UniProtKB-UniRule"/>
</dbReference>
<dbReference type="GO" id="GO:0006438">
    <property type="term" value="P:valyl-tRNA aminoacylation"/>
    <property type="evidence" value="ECO:0007669"/>
    <property type="project" value="UniProtKB-UniRule"/>
</dbReference>
<dbReference type="CDD" id="cd07962">
    <property type="entry name" value="Anticodon_Ia_Val"/>
    <property type="match status" value="1"/>
</dbReference>
<dbReference type="CDD" id="cd00817">
    <property type="entry name" value="ValRS_core"/>
    <property type="match status" value="1"/>
</dbReference>
<dbReference type="FunFam" id="1.10.287.380:FF:000001">
    <property type="entry name" value="Valine--tRNA ligase"/>
    <property type="match status" value="1"/>
</dbReference>
<dbReference type="FunFam" id="1.10.730.10:FF:000014">
    <property type="entry name" value="Valine--tRNA ligase"/>
    <property type="match status" value="1"/>
</dbReference>
<dbReference type="FunFam" id="3.40.50.620:FF:000032">
    <property type="entry name" value="Valine--tRNA ligase"/>
    <property type="match status" value="1"/>
</dbReference>
<dbReference type="FunFam" id="3.40.50.620:FF:000098">
    <property type="entry name" value="Valine--tRNA ligase"/>
    <property type="match status" value="1"/>
</dbReference>
<dbReference type="FunFam" id="3.90.740.10:FF:000005">
    <property type="entry name" value="Valine--tRNA ligase, mitochondrial"/>
    <property type="match status" value="1"/>
</dbReference>
<dbReference type="Gene3D" id="3.40.50.620">
    <property type="entry name" value="HUPs"/>
    <property type="match status" value="3"/>
</dbReference>
<dbReference type="Gene3D" id="1.10.730.10">
    <property type="entry name" value="Isoleucyl-tRNA Synthetase, Domain 1"/>
    <property type="match status" value="1"/>
</dbReference>
<dbReference type="Gene3D" id="1.10.287.380">
    <property type="entry name" value="Valyl-tRNA synthetase, C-terminal domain"/>
    <property type="match status" value="1"/>
</dbReference>
<dbReference type="Gene3D" id="3.90.740.10">
    <property type="entry name" value="Valyl/Leucyl/Isoleucyl-tRNA synthetase, editing domain"/>
    <property type="match status" value="1"/>
</dbReference>
<dbReference type="HAMAP" id="MF_02004">
    <property type="entry name" value="Val_tRNA_synth_type1"/>
    <property type="match status" value="1"/>
</dbReference>
<dbReference type="InterPro" id="IPR001412">
    <property type="entry name" value="aa-tRNA-synth_I_CS"/>
</dbReference>
<dbReference type="InterPro" id="IPR002300">
    <property type="entry name" value="aa-tRNA-synth_Ia"/>
</dbReference>
<dbReference type="InterPro" id="IPR033705">
    <property type="entry name" value="Anticodon_Ia_Val"/>
</dbReference>
<dbReference type="InterPro" id="IPR013155">
    <property type="entry name" value="M/V/L/I-tRNA-synth_anticd-bd"/>
</dbReference>
<dbReference type="InterPro" id="IPR014729">
    <property type="entry name" value="Rossmann-like_a/b/a_fold"/>
</dbReference>
<dbReference type="InterPro" id="IPR010978">
    <property type="entry name" value="tRNA-bd_arm"/>
</dbReference>
<dbReference type="InterPro" id="IPR009080">
    <property type="entry name" value="tRNAsynth_Ia_anticodon-bd"/>
</dbReference>
<dbReference type="InterPro" id="IPR037118">
    <property type="entry name" value="Val-tRNA_synth_C_sf"/>
</dbReference>
<dbReference type="InterPro" id="IPR019499">
    <property type="entry name" value="Val-tRNA_synth_tRNA-bd"/>
</dbReference>
<dbReference type="InterPro" id="IPR009008">
    <property type="entry name" value="Val/Leu/Ile-tRNA-synth_edit"/>
</dbReference>
<dbReference type="InterPro" id="IPR002303">
    <property type="entry name" value="Valyl-tRNA_ligase"/>
</dbReference>
<dbReference type="NCBIfam" id="NF004349">
    <property type="entry name" value="PRK05729.1"/>
    <property type="match status" value="1"/>
</dbReference>
<dbReference type="NCBIfam" id="TIGR00422">
    <property type="entry name" value="valS"/>
    <property type="match status" value="1"/>
</dbReference>
<dbReference type="PANTHER" id="PTHR11946:SF93">
    <property type="entry name" value="VALINE--TRNA LIGASE, CHLOROPLASTIC_MITOCHONDRIAL 2"/>
    <property type="match status" value="1"/>
</dbReference>
<dbReference type="PANTHER" id="PTHR11946">
    <property type="entry name" value="VALYL-TRNA SYNTHETASES"/>
    <property type="match status" value="1"/>
</dbReference>
<dbReference type="Pfam" id="PF08264">
    <property type="entry name" value="Anticodon_1"/>
    <property type="match status" value="1"/>
</dbReference>
<dbReference type="Pfam" id="PF00133">
    <property type="entry name" value="tRNA-synt_1"/>
    <property type="match status" value="2"/>
</dbReference>
<dbReference type="Pfam" id="PF10458">
    <property type="entry name" value="Val_tRNA-synt_C"/>
    <property type="match status" value="1"/>
</dbReference>
<dbReference type="PRINTS" id="PR00986">
    <property type="entry name" value="TRNASYNTHVAL"/>
</dbReference>
<dbReference type="SUPFAM" id="SSF47323">
    <property type="entry name" value="Anticodon-binding domain of a subclass of class I aminoacyl-tRNA synthetases"/>
    <property type="match status" value="1"/>
</dbReference>
<dbReference type="SUPFAM" id="SSF52374">
    <property type="entry name" value="Nucleotidylyl transferase"/>
    <property type="match status" value="1"/>
</dbReference>
<dbReference type="SUPFAM" id="SSF46589">
    <property type="entry name" value="tRNA-binding arm"/>
    <property type="match status" value="1"/>
</dbReference>
<dbReference type="SUPFAM" id="SSF50677">
    <property type="entry name" value="ValRS/IleRS/LeuRS editing domain"/>
    <property type="match status" value="1"/>
</dbReference>
<dbReference type="PROSITE" id="PS00178">
    <property type="entry name" value="AA_TRNA_LIGASE_I"/>
    <property type="match status" value="1"/>
</dbReference>
<proteinExistence type="inferred from homology"/>
<gene>
    <name evidence="1" type="primary">valS</name>
    <name type="ordered locus">SPy_1568</name>
    <name type="ordered locus">M5005_Spy1292</name>
</gene>
<evidence type="ECO:0000255" key="1">
    <source>
        <dbReference type="HAMAP-Rule" id="MF_02004"/>
    </source>
</evidence>
<evidence type="ECO:0000305" key="2"/>